<name>ARLY_LEGPL</name>
<protein>
    <recommendedName>
        <fullName evidence="1">Argininosuccinate lyase</fullName>
        <shortName evidence="1">ASAL</shortName>
        <ecNumber evidence="1">4.3.2.1</ecNumber>
    </recommendedName>
    <alternativeName>
        <fullName evidence="1">Arginosuccinase</fullName>
    </alternativeName>
</protein>
<comment type="catalytic activity">
    <reaction evidence="1">
        <text>2-(N(omega)-L-arginino)succinate = fumarate + L-arginine</text>
        <dbReference type="Rhea" id="RHEA:24020"/>
        <dbReference type="ChEBI" id="CHEBI:29806"/>
        <dbReference type="ChEBI" id="CHEBI:32682"/>
        <dbReference type="ChEBI" id="CHEBI:57472"/>
        <dbReference type="EC" id="4.3.2.1"/>
    </reaction>
</comment>
<comment type="pathway">
    <text evidence="1">Amino-acid biosynthesis; L-arginine biosynthesis; L-arginine from L-ornithine and carbamoyl phosphate: step 3/3.</text>
</comment>
<comment type="subcellular location">
    <subcellularLocation>
        <location evidence="1">Cytoplasm</location>
    </subcellularLocation>
</comment>
<comment type="similarity">
    <text evidence="1">Belongs to the lyase 1 family. Argininosuccinate lyase subfamily.</text>
</comment>
<proteinExistence type="inferred from homology"/>
<keyword id="KW-0028">Amino-acid biosynthesis</keyword>
<keyword id="KW-0055">Arginine biosynthesis</keyword>
<keyword id="KW-0963">Cytoplasm</keyword>
<keyword id="KW-0456">Lyase</keyword>
<gene>
    <name evidence="1" type="primary">argH</name>
    <name type="ordered locus">lpl0533</name>
</gene>
<evidence type="ECO:0000255" key="1">
    <source>
        <dbReference type="HAMAP-Rule" id="MF_00006"/>
    </source>
</evidence>
<organism>
    <name type="scientific">Legionella pneumophila (strain Lens)</name>
    <dbReference type="NCBI Taxonomy" id="297245"/>
    <lineage>
        <taxon>Bacteria</taxon>
        <taxon>Pseudomonadati</taxon>
        <taxon>Pseudomonadota</taxon>
        <taxon>Gammaproteobacteria</taxon>
        <taxon>Legionellales</taxon>
        <taxon>Legionellaceae</taxon>
        <taxon>Legionella</taxon>
    </lineage>
</organism>
<accession>Q5WZ49</accession>
<dbReference type="EC" id="4.3.2.1" evidence="1"/>
<dbReference type="EMBL" id="CR628337">
    <property type="protein sequence ID" value="CAH14763.1"/>
    <property type="molecule type" value="Genomic_DNA"/>
</dbReference>
<dbReference type="RefSeq" id="WP_011214736.1">
    <property type="nucleotide sequence ID" value="NC_006369.1"/>
</dbReference>
<dbReference type="SMR" id="Q5WZ49"/>
<dbReference type="KEGG" id="lpf:lpl0533"/>
<dbReference type="LegioList" id="lpl0533"/>
<dbReference type="HOGENOM" id="CLU_027272_2_0_6"/>
<dbReference type="UniPathway" id="UPA00068">
    <property type="reaction ID" value="UER00114"/>
</dbReference>
<dbReference type="Proteomes" id="UP000002517">
    <property type="component" value="Chromosome"/>
</dbReference>
<dbReference type="GO" id="GO:0005829">
    <property type="term" value="C:cytosol"/>
    <property type="evidence" value="ECO:0007669"/>
    <property type="project" value="TreeGrafter"/>
</dbReference>
<dbReference type="GO" id="GO:0004056">
    <property type="term" value="F:argininosuccinate lyase activity"/>
    <property type="evidence" value="ECO:0007669"/>
    <property type="project" value="UniProtKB-UniRule"/>
</dbReference>
<dbReference type="GO" id="GO:0042450">
    <property type="term" value="P:arginine biosynthetic process via ornithine"/>
    <property type="evidence" value="ECO:0007669"/>
    <property type="project" value="InterPro"/>
</dbReference>
<dbReference type="GO" id="GO:0006526">
    <property type="term" value="P:L-arginine biosynthetic process"/>
    <property type="evidence" value="ECO:0007669"/>
    <property type="project" value="UniProtKB-UniRule"/>
</dbReference>
<dbReference type="CDD" id="cd01359">
    <property type="entry name" value="Argininosuccinate_lyase"/>
    <property type="match status" value="1"/>
</dbReference>
<dbReference type="FunFam" id="1.10.275.10:FF:000002">
    <property type="entry name" value="Argininosuccinate lyase"/>
    <property type="match status" value="1"/>
</dbReference>
<dbReference type="FunFam" id="1.20.200.10:FF:000015">
    <property type="entry name" value="argininosuccinate lyase isoform X2"/>
    <property type="match status" value="1"/>
</dbReference>
<dbReference type="Gene3D" id="1.10.40.30">
    <property type="entry name" value="Fumarase/aspartase (C-terminal domain)"/>
    <property type="match status" value="1"/>
</dbReference>
<dbReference type="Gene3D" id="1.20.200.10">
    <property type="entry name" value="Fumarase/aspartase (Central domain)"/>
    <property type="match status" value="1"/>
</dbReference>
<dbReference type="Gene3D" id="1.10.275.10">
    <property type="entry name" value="Fumarase/aspartase (N-terminal domain)"/>
    <property type="match status" value="1"/>
</dbReference>
<dbReference type="HAMAP" id="MF_00006">
    <property type="entry name" value="Arg_succ_lyase"/>
    <property type="match status" value="1"/>
</dbReference>
<dbReference type="InterPro" id="IPR029419">
    <property type="entry name" value="Arg_succ_lyase_C"/>
</dbReference>
<dbReference type="InterPro" id="IPR009049">
    <property type="entry name" value="Argininosuccinate_lyase"/>
</dbReference>
<dbReference type="InterPro" id="IPR024083">
    <property type="entry name" value="Fumarase/histidase_N"/>
</dbReference>
<dbReference type="InterPro" id="IPR020557">
    <property type="entry name" value="Fumarate_lyase_CS"/>
</dbReference>
<dbReference type="InterPro" id="IPR000362">
    <property type="entry name" value="Fumarate_lyase_fam"/>
</dbReference>
<dbReference type="InterPro" id="IPR022761">
    <property type="entry name" value="Fumarate_lyase_N"/>
</dbReference>
<dbReference type="InterPro" id="IPR008948">
    <property type="entry name" value="L-Aspartase-like"/>
</dbReference>
<dbReference type="NCBIfam" id="TIGR00838">
    <property type="entry name" value="argH"/>
    <property type="match status" value="1"/>
</dbReference>
<dbReference type="PANTHER" id="PTHR43814">
    <property type="entry name" value="ARGININOSUCCINATE LYASE"/>
    <property type="match status" value="1"/>
</dbReference>
<dbReference type="PANTHER" id="PTHR43814:SF1">
    <property type="entry name" value="ARGININOSUCCINATE LYASE"/>
    <property type="match status" value="1"/>
</dbReference>
<dbReference type="Pfam" id="PF14698">
    <property type="entry name" value="ASL_C2"/>
    <property type="match status" value="1"/>
</dbReference>
<dbReference type="Pfam" id="PF00206">
    <property type="entry name" value="Lyase_1"/>
    <property type="match status" value="1"/>
</dbReference>
<dbReference type="PRINTS" id="PR00145">
    <property type="entry name" value="ARGSUCLYASE"/>
</dbReference>
<dbReference type="PRINTS" id="PR00149">
    <property type="entry name" value="FUMRATELYASE"/>
</dbReference>
<dbReference type="SUPFAM" id="SSF48557">
    <property type="entry name" value="L-aspartase-like"/>
    <property type="match status" value="1"/>
</dbReference>
<dbReference type="PROSITE" id="PS00163">
    <property type="entry name" value="FUMARATE_LYASES"/>
    <property type="match status" value="1"/>
</dbReference>
<reference key="1">
    <citation type="journal article" date="2004" name="Nat. Genet.">
        <title>Evidence in the Legionella pneumophila genome for exploitation of host cell functions and high genome plasticity.</title>
        <authorList>
            <person name="Cazalet C."/>
            <person name="Rusniok C."/>
            <person name="Brueggemann H."/>
            <person name="Zidane N."/>
            <person name="Magnier A."/>
            <person name="Ma L."/>
            <person name="Tichit M."/>
            <person name="Jarraud S."/>
            <person name="Bouchier C."/>
            <person name="Vandenesch F."/>
            <person name="Kunst F."/>
            <person name="Etienne J."/>
            <person name="Glaser P."/>
            <person name="Buchrieser C."/>
        </authorList>
    </citation>
    <scope>NUCLEOTIDE SEQUENCE [LARGE SCALE GENOMIC DNA]</scope>
    <source>
        <strain>Lens</strain>
    </source>
</reference>
<sequence>MTNKTWGGRFKKSLDSGVNQFNASLSFDHVLFDQDINGSQVHVKQLAKQKILTEAECQGIYSALEEIRTEIKQGQYSFNERDEEDIHMFIEQLLIQKIGDLGKKLHTGRSRNDQVALDLRLYTRDKGCLINELLTRLIVCLDDLTSKHQQDLMPGYTHLQQAQPVALGAYFNAYQCMFSRDKSRLEDWFKRMNYSPLGAGALAGSTLPLDREWVAESLGFAGIIPNTLDAVSDRDFVIELCSVAAMIMMHLSRLCEDLILWSTQEFNFVTLDDAFATGSSLMPNKKNPDVPELIRGKSGRVYGHLMAILTVMKGLPLAYNKDMQEDKEGLFDTINTIIVCLQMITPFLQSLTFNTPLMRTKAQSGYLDATAILESLVMKGMPFRDAHHQVGAWIAEAIEKQCSLNELLKGG</sequence>
<feature type="chain" id="PRO_0000240736" description="Argininosuccinate lyase">
    <location>
        <begin position="1"/>
        <end position="411"/>
    </location>
</feature>